<protein>
    <recommendedName>
        <fullName>Annexin D2</fullName>
    </recommendedName>
    <alternativeName>
        <fullName>AnnAt2</fullName>
    </alternativeName>
</protein>
<sequence length="317" mass="36266">MASLKVPSNVPLPEDDAEQLHKAFSGWGTNEKLIISILAHRNAAQRSLIRSVYAATYNEDLLKALDKELSSDFERAVMLWTLDPPERDAYLAKESTKMFTKNNWVLVEIACTRPALELIKVKQAYQARYKKSIEEDVAQHTSGDLRKLLLPLVSTFRYEGDDVNMMLARSEAKILHEKVSEKSYSDDDFIRILTTRSKAQLGATLNHYNNEYGNAINKNLKEESDDNDYMKLLRAVITCLTYPEKHFEKVLRLSINKMGTDEWGLTRVVTTRTEVDMERIKEEYQRRNSIPLDRAIAKDTSGDYEDMLVALLGHGDA</sequence>
<evidence type="ECO:0000250" key="1">
    <source>
        <dbReference type="UniProtKB" id="P93157"/>
    </source>
</evidence>
<evidence type="ECO:0000250" key="2">
    <source>
        <dbReference type="UniProtKB" id="Q9SYT0"/>
    </source>
</evidence>
<evidence type="ECO:0000255" key="3">
    <source>
        <dbReference type="PROSITE-ProRule" id="PRU01245"/>
    </source>
</evidence>
<evidence type="ECO:0000269" key="4">
    <source>
    </source>
</evidence>
<evidence type="ECO:0000269" key="5">
    <source>
    </source>
</evidence>
<evidence type="ECO:0000269" key="6">
    <source>
    </source>
</evidence>
<evidence type="ECO:0000305" key="7"/>
<name>ANXD2_ARATH</name>
<keyword id="KW-0007">Acetylation</keyword>
<keyword id="KW-0025">Alternative splicing</keyword>
<keyword id="KW-0041">Annexin</keyword>
<keyword id="KW-0106">Calcium</keyword>
<keyword id="KW-0111">Calcium/phospholipid-binding</keyword>
<keyword id="KW-0963">Cytoplasm</keyword>
<keyword id="KW-0472">Membrane</keyword>
<keyword id="KW-0479">Metal-binding</keyword>
<keyword id="KW-0597">Phosphoprotein</keyword>
<keyword id="KW-1185">Reference proteome</keyword>
<keyword id="KW-0677">Repeat</keyword>
<comment type="function">
    <text>May mediate regulated, targeted secretion of Golgi-derived vesicles during seedling development.</text>
</comment>
<comment type="subcellular location">
    <subcellularLocation>
        <location>Cytoplasm</location>
        <location>Cytosol</location>
    </subcellularLocation>
    <subcellularLocation>
        <location>Membrane</location>
    </subcellularLocation>
    <text>translocate from cytosol to membrane in a calcium-dependent manner.</text>
</comment>
<comment type="alternative products">
    <event type="alternative splicing"/>
    <isoform>
        <id>Q9XEE2-1</id>
        <name>1</name>
        <sequence type="displayed"/>
    </isoform>
    <text>A number of isoforms are produced. According to EST sequences.</text>
</comment>
<comment type="tissue specificity">
    <text evidence="4">Expressed mainly in roots and flowers. Low in stems and bearly detectable in leaves.</text>
</comment>
<comment type="developmental stage">
    <text evidence="4">In germinating seedlings, expressed in root, hypocotyl and cotyledon epidermal cells. By day 4, expression expands in the root endodermis and throughout initiating lateral roots. As the seedling matures, expression in the hypocotyl and cotyledons decreases and by day 14, expression is restricted to creases between the shoot meristem and its lateral primordia.</text>
</comment>
<comment type="induction">
    <text evidence="5">Up-regulated by heat shock stress. Down-regulated by cold, dehydration, and salt stresses.</text>
</comment>
<comment type="domain">
    <text>A pair of annexin repeats may form one binding site for calcium and phospholipid.</text>
</comment>
<comment type="similarity">
    <text evidence="7">Belongs to the annexin (TC 1.A.31.1) family.</text>
</comment>
<accession>Q9XEE2</accession>
<accession>Q42063</accession>
<feature type="initiator methionine" description="Removed" evidence="2">
    <location>
        <position position="1"/>
    </location>
</feature>
<feature type="chain" id="PRO_0000278816" description="Annexin D2">
    <location>
        <begin position="2"/>
        <end position="317"/>
    </location>
</feature>
<feature type="repeat" description="Annexin 1" evidence="3">
    <location>
        <begin position="11"/>
        <end position="82"/>
    </location>
</feature>
<feature type="repeat" description="Annexin 2" evidence="3">
    <location>
        <begin position="83"/>
        <end position="154"/>
    </location>
</feature>
<feature type="repeat" description="Annexin 3" evidence="3">
    <location>
        <begin position="166"/>
        <end position="238"/>
    </location>
</feature>
<feature type="repeat" description="Annexin 4" evidence="3">
    <location>
        <begin position="242"/>
        <end position="313"/>
    </location>
</feature>
<feature type="binding site" evidence="1">
    <location>
        <position position="24"/>
    </location>
    <ligand>
        <name>Ca(2+)</name>
        <dbReference type="ChEBI" id="CHEBI:29108"/>
        <label>1</label>
    </ligand>
</feature>
<feature type="binding site" evidence="1">
    <location>
        <position position="26"/>
    </location>
    <ligand>
        <name>Ca(2+)</name>
        <dbReference type="ChEBI" id="CHEBI:29108"/>
        <label>1</label>
    </ligand>
</feature>
<feature type="binding site" evidence="1">
    <location>
        <position position="28"/>
    </location>
    <ligand>
        <name>Ca(2+)</name>
        <dbReference type="ChEBI" id="CHEBI:29108"/>
        <label>1</label>
    </ligand>
</feature>
<feature type="binding site" evidence="1">
    <location>
        <position position="68"/>
    </location>
    <ligand>
        <name>Ca(2+)</name>
        <dbReference type="ChEBI" id="CHEBI:29108"/>
        <label>1</label>
    </ligand>
</feature>
<feature type="binding site" evidence="1">
    <location>
        <position position="255"/>
    </location>
    <ligand>
        <name>Ca(2+)</name>
        <dbReference type="ChEBI" id="CHEBI:29108"/>
        <label>2</label>
    </ligand>
</feature>
<feature type="binding site" evidence="1">
    <location>
        <position position="259"/>
    </location>
    <ligand>
        <name>Ca(2+)</name>
        <dbReference type="ChEBI" id="CHEBI:29108"/>
        <label>2</label>
    </ligand>
</feature>
<feature type="binding site" evidence="1">
    <location>
        <position position="299"/>
    </location>
    <ligand>
        <name>Ca(2+)</name>
        <dbReference type="ChEBI" id="CHEBI:29108"/>
        <label>2</label>
    </ligand>
</feature>
<feature type="binding site" evidence="1">
    <location>
        <position position="300"/>
    </location>
    <ligand>
        <name>Ca(2+)</name>
        <dbReference type="ChEBI" id="CHEBI:29108"/>
        <label>3</label>
    </ligand>
</feature>
<feature type="binding site" evidence="1">
    <location>
        <position position="305"/>
    </location>
    <ligand>
        <name>Ca(2+)</name>
        <dbReference type="ChEBI" id="CHEBI:29108"/>
        <label>3</label>
    </ligand>
</feature>
<feature type="modified residue" description="N-acetylalanine" evidence="2">
    <location>
        <position position="2"/>
    </location>
</feature>
<feature type="modified residue" description="Phosphoserine" evidence="6">
    <location>
        <position position="95"/>
    </location>
</feature>
<feature type="modified residue" description="Phosphothreonine" evidence="6">
    <location>
        <position position="100"/>
    </location>
</feature>
<feature type="modified residue" description="Phosphothreonine" evidence="2">
    <location>
        <position position="112"/>
    </location>
</feature>
<feature type="modified residue" description="Phosphotyrosine" evidence="6">
    <location>
        <position position="129"/>
    </location>
</feature>
<feature type="modified residue" description="Phosphotyrosine" evidence="2">
    <location>
        <position position="284"/>
    </location>
</feature>
<feature type="modified residue" description="Phosphoserine" evidence="2">
    <location>
        <position position="289"/>
    </location>
</feature>
<feature type="sequence conflict" description="In Ref. 6; CAA81121." evidence="7" ref="6">
    <original>LIKVK</original>
    <variation>FIQG</variation>
    <location>
        <begin position="118"/>
        <end position="122"/>
    </location>
</feature>
<gene>
    <name type="primary">ANN2</name>
    <name type="synonym">ANNAT2</name>
    <name type="ordered locus">At5g65020</name>
    <name type="ORF">MXK3.27</name>
</gene>
<dbReference type="EMBL" id="AF083914">
    <property type="protein sequence ID" value="AAD34237.1"/>
    <property type="molecule type" value="mRNA"/>
</dbReference>
<dbReference type="EMBL" id="AB019236">
    <property type="protein sequence ID" value="BAA97314.1"/>
    <property type="molecule type" value="Genomic_DNA"/>
</dbReference>
<dbReference type="EMBL" id="CP002688">
    <property type="protein sequence ID" value="AED97986.1"/>
    <property type="molecule type" value="Genomic_DNA"/>
</dbReference>
<dbReference type="EMBL" id="AY070400">
    <property type="protein sequence ID" value="AAL49896.1"/>
    <property type="molecule type" value="mRNA"/>
</dbReference>
<dbReference type="EMBL" id="AY096577">
    <property type="protein sequence ID" value="AAM20227.1"/>
    <property type="molecule type" value="mRNA"/>
</dbReference>
<dbReference type="EMBL" id="AY085713">
    <property type="protein sequence ID" value="AAM62931.1"/>
    <property type="molecule type" value="mRNA"/>
</dbReference>
<dbReference type="EMBL" id="Z25968">
    <property type="protein sequence ID" value="CAA81121.1"/>
    <property type="molecule type" value="mRNA"/>
</dbReference>
<dbReference type="RefSeq" id="NP_201307.1">
    <molecule id="Q9XEE2-1"/>
    <property type="nucleotide sequence ID" value="NM_125901.4"/>
</dbReference>
<dbReference type="SMR" id="Q9XEE2"/>
<dbReference type="BioGRID" id="21868">
    <property type="interactions" value="2"/>
</dbReference>
<dbReference type="FunCoup" id="Q9XEE2">
    <property type="interactions" value="833"/>
</dbReference>
<dbReference type="IntAct" id="Q9XEE2">
    <property type="interactions" value="1"/>
</dbReference>
<dbReference type="MINT" id="Q9XEE2"/>
<dbReference type="STRING" id="3702.Q9XEE2"/>
<dbReference type="iPTMnet" id="Q9XEE2"/>
<dbReference type="MetOSite" id="Q9XEE2"/>
<dbReference type="PaxDb" id="3702-AT5G65020.1"/>
<dbReference type="ProteomicsDB" id="246774">
    <molecule id="Q9XEE2-1"/>
</dbReference>
<dbReference type="DNASU" id="836626"/>
<dbReference type="EnsemblPlants" id="AT5G65020.1">
    <molecule id="Q9XEE2-1"/>
    <property type="protein sequence ID" value="AT5G65020.1"/>
    <property type="gene ID" value="AT5G65020"/>
</dbReference>
<dbReference type="GeneID" id="836626"/>
<dbReference type="Gramene" id="AT5G65020.1">
    <molecule id="Q9XEE2-1"/>
    <property type="protein sequence ID" value="AT5G65020.1"/>
    <property type="gene ID" value="AT5G65020"/>
</dbReference>
<dbReference type="KEGG" id="ath:AT5G65020"/>
<dbReference type="Araport" id="AT5G65020"/>
<dbReference type="TAIR" id="AT5G65020">
    <property type="gene designation" value="ANNAT2"/>
</dbReference>
<dbReference type="eggNOG" id="KOG0819">
    <property type="taxonomic scope" value="Eukaryota"/>
</dbReference>
<dbReference type="HOGENOM" id="CLU_025300_0_1_1"/>
<dbReference type="InParanoid" id="Q9XEE2"/>
<dbReference type="OMA" id="ASNWVIM"/>
<dbReference type="OrthoDB" id="37886at2759"/>
<dbReference type="PhylomeDB" id="Q9XEE2"/>
<dbReference type="PRO" id="PR:Q9XEE2"/>
<dbReference type="Proteomes" id="UP000006548">
    <property type="component" value="Chromosome 5"/>
</dbReference>
<dbReference type="ExpressionAtlas" id="Q9XEE2">
    <property type="expression patterns" value="baseline and differential"/>
</dbReference>
<dbReference type="GO" id="GO:0005829">
    <property type="term" value="C:cytosol"/>
    <property type="evidence" value="ECO:0007005"/>
    <property type="project" value="TAIR"/>
</dbReference>
<dbReference type="GO" id="GO:0016020">
    <property type="term" value="C:membrane"/>
    <property type="evidence" value="ECO:0007669"/>
    <property type="project" value="UniProtKB-SubCell"/>
</dbReference>
<dbReference type="GO" id="GO:0009536">
    <property type="term" value="C:plastid"/>
    <property type="evidence" value="ECO:0007005"/>
    <property type="project" value="TAIR"/>
</dbReference>
<dbReference type="GO" id="GO:0009579">
    <property type="term" value="C:thylakoid"/>
    <property type="evidence" value="ECO:0007005"/>
    <property type="project" value="TAIR"/>
</dbReference>
<dbReference type="GO" id="GO:0005509">
    <property type="term" value="F:calcium ion binding"/>
    <property type="evidence" value="ECO:0000250"/>
    <property type="project" value="UniProtKB"/>
</dbReference>
<dbReference type="GO" id="GO:0005544">
    <property type="term" value="F:calcium-dependent phospholipid binding"/>
    <property type="evidence" value="ECO:0007669"/>
    <property type="project" value="UniProtKB-KW"/>
</dbReference>
<dbReference type="GO" id="GO:0110128">
    <property type="term" value="P:phloem sucrose unloading"/>
    <property type="evidence" value="ECO:0000315"/>
    <property type="project" value="TAIR"/>
</dbReference>
<dbReference type="GO" id="GO:0015774">
    <property type="term" value="P:polysaccharide transport"/>
    <property type="evidence" value="ECO:0000304"/>
    <property type="project" value="TAIR"/>
</dbReference>
<dbReference type="GO" id="GO:0080022">
    <property type="term" value="P:primary root development"/>
    <property type="evidence" value="ECO:0000315"/>
    <property type="project" value="TAIR"/>
</dbReference>
<dbReference type="GO" id="GO:0009409">
    <property type="term" value="P:response to cold"/>
    <property type="evidence" value="ECO:0000270"/>
    <property type="project" value="TAIR"/>
</dbReference>
<dbReference type="GO" id="GO:0009408">
    <property type="term" value="P:response to heat"/>
    <property type="evidence" value="ECO:0000270"/>
    <property type="project" value="TAIR"/>
</dbReference>
<dbReference type="GO" id="GO:0009651">
    <property type="term" value="P:response to salt stress"/>
    <property type="evidence" value="ECO:0000270"/>
    <property type="project" value="TAIR"/>
</dbReference>
<dbReference type="GO" id="GO:0009414">
    <property type="term" value="P:response to water deprivation"/>
    <property type="evidence" value="ECO:0000270"/>
    <property type="project" value="TAIR"/>
</dbReference>
<dbReference type="FunFam" id="1.10.220.10:FF:000001">
    <property type="entry name" value="Annexin"/>
    <property type="match status" value="1"/>
</dbReference>
<dbReference type="FunFam" id="1.10.220.10:FF:000006">
    <property type="entry name" value="Annexin"/>
    <property type="match status" value="1"/>
</dbReference>
<dbReference type="FunFam" id="1.10.220.10:FF:000008">
    <property type="entry name" value="Annexin"/>
    <property type="match status" value="1"/>
</dbReference>
<dbReference type="FunFam" id="1.10.220.10:FF:000009">
    <property type="entry name" value="Annexin"/>
    <property type="match status" value="1"/>
</dbReference>
<dbReference type="Gene3D" id="1.10.220.10">
    <property type="entry name" value="Annexin"/>
    <property type="match status" value="4"/>
</dbReference>
<dbReference type="InterPro" id="IPR001464">
    <property type="entry name" value="Annexin"/>
</dbReference>
<dbReference type="InterPro" id="IPR018502">
    <property type="entry name" value="Annexin_repeat"/>
</dbReference>
<dbReference type="InterPro" id="IPR018252">
    <property type="entry name" value="Annexin_repeat_CS"/>
</dbReference>
<dbReference type="InterPro" id="IPR037104">
    <property type="entry name" value="Annexin_sf"/>
</dbReference>
<dbReference type="InterPro" id="IPR009118">
    <property type="entry name" value="AnnexinD_plant"/>
</dbReference>
<dbReference type="PANTHER" id="PTHR10502">
    <property type="entry name" value="ANNEXIN"/>
    <property type="match status" value="1"/>
</dbReference>
<dbReference type="PANTHER" id="PTHR10502:SF220">
    <property type="entry name" value="ANNEXIN D2"/>
    <property type="match status" value="1"/>
</dbReference>
<dbReference type="Pfam" id="PF00191">
    <property type="entry name" value="Annexin"/>
    <property type="match status" value="4"/>
</dbReference>
<dbReference type="PRINTS" id="PR00196">
    <property type="entry name" value="ANNEXIN"/>
</dbReference>
<dbReference type="PRINTS" id="PR01814">
    <property type="entry name" value="ANNEXINPLANT"/>
</dbReference>
<dbReference type="SMART" id="SM00335">
    <property type="entry name" value="ANX"/>
    <property type="match status" value="4"/>
</dbReference>
<dbReference type="SUPFAM" id="SSF47874">
    <property type="entry name" value="Annexin"/>
    <property type="match status" value="1"/>
</dbReference>
<dbReference type="PROSITE" id="PS00223">
    <property type="entry name" value="ANNEXIN_1"/>
    <property type="match status" value="1"/>
</dbReference>
<dbReference type="PROSITE" id="PS51897">
    <property type="entry name" value="ANNEXIN_2"/>
    <property type="match status" value="4"/>
</dbReference>
<reference key="1">
    <citation type="online journal article" date="1999" name="Plant Gene Register">
        <title>Isolation and characterization of two different Arabidopsis annexin cDNAs.</title>
        <authorList>
            <person name="Clark G.B."/>
            <person name="Roux S.J."/>
        </authorList>
        <locator>PGR99-065</locator>
    </citation>
    <scope>NUCLEOTIDE SEQUENCE [MRNA]</scope>
</reference>
<reference key="2">
    <citation type="journal article" date="2000" name="DNA Res.">
        <title>Structural analysis of Arabidopsis thaliana chromosome 5. X. Sequence features of the regions of 3,076,755 bp covered by sixty P1 and TAC clones.</title>
        <authorList>
            <person name="Sato S."/>
            <person name="Nakamura Y."/>
            <person name="Kaneko T."/>
            <person name="Katoh T."/>
            <person name="Asamizu E."/>
            <person name="Kotani H."/>
            <person name="Tabata S."/>
        </authorList>
    </citation>
    <scope>NUCLEOTIDE SEQUENCE [LARGE SCALE GENOMIC DNA]</scope>
    <source>
        <strain>cv. Columbia</strain>
    </source>
</reference>
<reference key="3">
    <citation type="journal article" date="2017" name="Plant J.">
        <title>Araport11: a complete reannotation of the Arabidopsis thaliana reference genome.</title>
        <authorList>
            <person name="Cheng C.Y."/>
            <person name="Krishnakumar V."/>
            <person name="Chan A.P."/>
            <person name="Thibaud-Nissen F."/>
            <person name="Schobel S."/>
            <person name="Town C.D."/>
        </authorList>
    </citation>
    <scope>GENOME REANNOTATION</scope>
    <source>
        <strain>cv. Columbia</strain>
    </source>
</reference>
<reference key="4">
    <citation type="journal article" date="2003" name="Science">
        <title>Empirical analysis of transcriptional activity in the Arabidopsis genome.</title>
        <authorList>
            <person name="Yamada K."/>
            <person name="Lim J."/>
            <person name="Dale J.M."/>
            <person name="Chen H."/>
            <person name="Shinn P."/>
            <person name="Palm C.J."/>
            <person name="Southwick A.M."/>
            <person name="Wu H.C."/>
            <person name="Kim C.J."/>
            <person name="Nguyen M."/>
            <person name="Pham P.K."/>
            <person name="Cheuk R.F."/>
            <person name="Karlin-Newmann G."/>
            <person name="Liu S.X."/>
            <person name="Lam B."/>
            <person name="Sakano H."/>
            <person name="Wu T."/>
            <person name="Yu G."/>
            <person name="Miranda M."/>
            <person name="Quach H.L."/>
            <person name="Tripp M."/>
            <person name="Chang C.H."/>
            <person name="Lee J.M."/>
            <person name="Toriumi M.J."/>
            <person name="Chan M.M."/>
            <person name="Tang C.C."/>
            <person name="Onodera C.S."/>
            <person name="Deng J.M."/>
            <person name="Akiyama K."/>
            <person name="Ansari Y."/>
            <person name="Arakawa T."/>
            <person name="Banh J."/>
            <person name="Banno F."/>
            <person name="Bowser L."/>
            <person name="Brooks S.Y."/>
            <person name="Carninci P."/>
            <person name="Chao Q."/>
            <person name="Choy N."/>
            <person name="Enju A."/>
            <person name="Goldsmith A.D."/>
            <person name="Gurjal M."/>
            <person name="Hansen N.F."/>
            <person name="Hayashizaki Y."/>
            <person name="Johnson-Hopson C."/>
            <person name="Hsuan V.W."/>
            <person name="Iida K."/>
            <person name="Karnes M."/>
            <person name="Khan S."/>
            <person name="Koesema E."/>
            <person name="Ishida J."/>
            <person name="Jiang P.X."/>
            <person name="Jones T."/>
            <person name="Kawai J."/>
            <person name="Kamiya A."/>
            <person name="Meyers C."/>
            <person name="Nakajima M."/>
            <person name="Narusaka M."/>
            <person name="Seki M."/>
            <person name="Sakurai T."/>
            <person name="Satou M."/>
            <person name="Tamse R."/>
            <person name="Vaysberg M."/>
            <person name="Wallender E.K."/>
            <person name="Wong C."/>
            <person name="Yamamura Y."/>
            <person name="Yuan S."/>
            <person name="Shinozaki K."/>
            <person name="Davis R.W."/>
            <person name="Theologis A."/>
            <person name="Ecker J.R."/>
        </authorList>
    </citation>
    <scope>NUCLEOTIDE SEQUENCE [LARGE SCALE MRNA]</scope>
    <source>
        <strain>cv. Columbia</strain>
    </source>
</reference>
<reference key="5">
    <citation type="submission" date="2002-03" db="EMBL/GenBank/DDBJ databases">
        <title>Full-length cDNA from Arabidopsis thaliana.</title>
        <authorList>
            <person name="Brover V.V."/>
            <person name="Troukhan M.E."/>
            <person name="Alexandrov N.A."/>
            <person name="Lu Y.-P."/>
            <person name="Flavell R.B."/>
            <person name="Feldmann K.A."/>
        </authorList>
    </citation>
    <scope>NUCLEOTIDE SEQUENCE [LARGE SCALE MRNA]</scope>
</reference>
<reference key="6">
    <citation type="journal article" date="1993" name="Plant J.">
        <title>An inventory of 1152 expressed sequence tags obtained by partial sequencing of cDNAs from Arabidopsis thaliana.</title>
        <authorList>
            <person name="Hoefte H."/>
            <person name="Desprez T."/>
            <person name="Amselem J."/>
            <person name="Chiapello H."/>
            <person name="Rouze P."/>
            <person name="Caboche M."/>
            <person name="Moisan A."/>
            <person name="Jourjon M.-F."/>
            <person name="Charpenteau J.-L."/>
            <person name="Berthomieu P."/>
            <person name="Guerrier D."/>
            <person name="Giraudat J."/>
            <person name="Quigley F."/>
            <person name="Thomas F."/>
            <person name="Yu D.-Y."/>
            <person name="Mache R."/>
            <person name="Raynal M."/>
            <person name="Cooke R."/>
            <person name="Grellet F."/>
            <person name="Delseny M."/>
            <person name="Parmentier Y."/>
            <person name="de Marcillac G."/>
            <person name="Gigot C."/>
            <person name="Fleck J."/>
            <person name="Philipps G."/>
            <person name="Axelos M."/>
            <person name="Bardet C."/>
            <person name="Tremousaygue D."/>
            <person name="Lescure B."/>
        </authorList>
    </citation>
    <scope>NUCLEOTIDE SEQUENCE [LARGE SCALE MRNA] OF 5-124</scope>
    <source>
        <strain>cv. Columbia</strain>
    </source>
</reference>
<reference key="7">
    <citation type="journal article" date="2001" name="Plant Physiol.">
        <title>Differential expression of members of the annexin multigene family in Arabidopsis.</title>
        <authorList>
            <person name="Clark G.B."/>
            <person name="Sessions A."/>
            <person name="Eastburn D.J."/>
            <person name="Roux S.J."/>
        </authorList>
    </citation>
    <scope>SUBCELLULAR LOCATION</scope>
    <scope>TISSUE SPECIFICITY</scope>
    <scope>DEVELOPMENTAL STAGE</scope>
</reference>
<reference key="8">
    <citation type="journal article" date="2005" name="Planta">
        <title>Immunolocalization and histochemical evidence for the association of two different Arabidopsis annexins with secretion during early seedling growth and development.</title>
        <authorList>
            <person name="Clark G.B."/>
            <person name="Lee D."/>
            <person name="Dauwalder M."/>
            <person name="Roux S.J."/>
        </authorList>
    </citation>
    <scope>SUBCELLULAR LOCATION</scope>
</reference>
<reference key="9">
    <citation type="journal article" date="2006" name="Plant Physiol. Biochem.">
        <title>Expression profiling of the Arabidopsis annexin gene family during germination, de-etiolation and abiotic stress.</title>
        <authorList>
            <person name="Cantero A."/>
            <person name="Barthakur S."/>
            <person name="Bushart T.J."/>
            <person name="Chou S."/>
            <person name="Morgan R.O."/>
            <person name="Fernandez M.P."/>
            <person name="Clark G.B."/>
            <person name="Roux S.J."/>
        </authorList>
    </citation>
    <scope>INDUCTION</scope>
    <scope>GENE FAMILY</scope>
</reference>
<reference key="10">
    <citation type="journal article" date="2007" name="Mol. Cell. Proteomics">
        <title>Multidimensional protein identification technology (MudPIT) analysis of ubiquitinated proteins in plants.</title>
        <authorList>
            <person name="Maor R."/>
            <person name="Jones A."/>
            <person name="Nuehse T.S."/>
            <person name="Studholme D.J."/>
            <person name="Peck S.C."/>
            <person name="Shirasu K."/>
        </authorList>
    </citation>
    <scope>IDENTIFICATION BY MASS SPECTROMETRY [LARGE SCALE ANALYSIS]</scope>
    <source>
        <strain>cv. Landsberg erecta</strain>
    </source>
</reference>
<reference key="11">
    <citation type="journal article" date="2008" name="J. Proteome Res.">
        <title>Site-specific phosphorylation profiling of Arabidopsis proteins by mass spectrometry and peptide chip analysis.</title>
        <authorList>
            <person name="de la Fuente van Bentem S."/>
            <person name="Anrather D."/>
            <person name="Dohnal I."/>
            <person name="Roitinger E."/>
            <person name="Csaszar E."/>
            <person name="Joore J."/>
            <person name="Buijnink J."/>
            <person name="Carreri A."/>
            <person name="Forzani C."/>
            <person name="Lorkovic Z.J."/>
            <person name="Barta A."/>
            <person name="Lecourieux D."/>
            <person name="Verhounig A."/>
            <person name="Jonak C."/>
            <person name="Hirt H."/>
        </authorList>
    </citation>
    <scope>IDENTIFICATION BY MASS SPECTROMETRY [LARGE SCALE ANALYSIS]</scope>
    <source>
        <tissue>Root</tissue>
    </source>
</reference>
<reference key="12">
    <citation type="journal article" date="2015" name="FEBS Lett.">
        <title>Arabidopsis Yak1 protein (AtYak1) is a dual specificity protein kinase.</title>
        <authorList>
            <person name="Kim D."/>
            <person name="Ntui V.O."/>
            <person name="Zhang N."/>
            <person name="Xiong L."/>
        </authorList>
    </citation>
    <scope>IDENTIFICATION BY MASS SPECTROMETRY</scope>
    <scope>PHOSPHORYLATION AT SER-95; THR-100 AND TYR-129</scope>
</reference>
<organism>
    <name type="scientific">Arabidopsis thaliana</name>
    <name type="common">Mouse-ear cress</name>
    <dbReference type="NCBI Taxonomy" id="3702"/>
    <lineage>
        <taxon>Eukaryota</taxon>
        <taxon>Viridiplantae</taxon>
        <taxon>Streptophyta</taxon>
        <taxon>Embryophyta</taxon>
        <taxon>Tracheophyta</taxon>
        <taxon>Spermatophyta</taxon>
        <taxon>Magnoliopsida</taxon>
        <taxon>eudicotyledons</taxon>
        <taxon>Gunneridae</taxon>
        <taxon>Pentapetalae</taxon>
        <taxon>rosids</taxon>
        <taxon>malvids</taxon>
        <taxon>Brassicales</taxon>
        <taxon>Brassicaceae</taxon>
        <taxon>Camelineae</taxon>
        <taxon>Arabidopsis</taxon>
    </lineage>
</organism>
<proteinExistence type="evidence at protein level"/>